<dbReference type="EC" id="2.1.2.3" evidence="1"/>
<dbReference type="EC" id="3.5.4.10" evidence="1"/>
<dbReference type="EMBL" id="CT971583">
    <property type="protein sequence ID" value="CAK22719.1"/>
    <property type="molecule type" value="Genomic_DNA"/>
</dbReference>
<dbReference type="SMR" id="A5GIF4"/>
<dbReference type="STRING" id="32051.SynWH7803_0293"/>
<dbReference type="KEGG" id="syx:SynWH7803_0293"/>
<dbReference type="eggNOG" id="COG0138">
    <property type="taxonomic scope" value="Bacteria"/>
</dbReference>
<dbReference type="HOGENOM" id="CLU_016316_5_2_3"/>
<dbReference type="OrthoDB" id="9802065at2"/>
<dbReference type="UniPathway" id="UPA00074">
    <property type="reaction ID" value="UER00133"/>
</dbReference>
<dbReference type="UniPathway" id="UPA00074">
    <property type="reaction ID" value="UER00135"/>
</dbReference>
<dbReference type="Proteomes" id="UP000001566">
    <property type="component" value="Chromosome"/>
</dbReference>
<dbReference type="GO" id="GO:0005829">
    <property type="term" value="C:cytosol"/>
    <property type="evidence" value="ECO:0007669"/>
    <property type="project" value="TreeGrafter"/>
</dbReference>
<dbReference type="GO" id="GO:0003937">
    <property type="term" value="F:IMP cyclohydrolase activity"/>
    <property type="evidence" value="ECO:0007669"/>
    <property type="project" value="UniProtKB-UniRule"/>
</dbReference>
<dbReference type="GO" id="GO:0004643">
    <property type="term" value="F:phosphoribosylaminoimidazolecarboxamide formyltransferase activity"/>
    <property type="evidence" value="ECO:0007669"/>
    <property type="project" value="UniProtKB-UniRule"/>
</dbReference>
<dbReference type="GO" id="GO:0006189">
    <property type="term" value="P:'de novo' IMP biosynthetic process"/>
    <property type="evidence" value="ECO:0007669"/>
    <property type="project" value="UniProtKB-UniRule"/>
</dbReference>
<dbReference type="CDD" id="cd01421">
    <property type="entry name" value="IMPCH"/>
    <property type="match status" value="1"/>
</dbReference>
<dbReference type="FunFam" id="3.40.140.20:FF:000001">
    <property type="entry name" value="Bifunctional purine biosynthesis protein PurH"/>
    <property type="match status" value="1"/>
</dbReference>
<dbReference type="FunFam" id="3.40.50.1380:FF:000001">
    <property type="entry name" value="Bifunctional purine biosynthesis protein PurH"/>
    <property type="match status" value="1"/>
</dbReference>
<dbReference type="Gene3D" id="3.40.140.20">
    <property type="match status" value="2"/>
</dbReference>
<dbReference type="Gene3D" id="3.40.50.1380">
    <property type="entry name" value="Methylglyoxal synthase-like domain"/>
    <property type="match status" value="1"/>
</dbReference>
<dbReference type="HAMAP" id="MF_00139">
    <property type="entry name" value="PurH"/>
    <property type="match status" value="1"/>
</dbReference>
<dbReference type="InterPro" id="IPR024051">
    <property type="entry name" value="AICAR_Tfase_dup_dom_sf"/>
</dbReference>
<dbReference type="InterPro" id="IPR016193">
    <property type="entry name" value="Cytidine_deaminase-like"/>
</dbReference>
<dbReference type="InterPro" id="IPR011607">
    <property type="entry name" value="MGS-like_dom"/>
</dbReference>
<dbReference type="InterPro" id="IPR036914">
    <property type="entry name" value="MGS-like_dom_sf"/>
</dbReference>
<dbReference type="InterPro" id="IPR002695">
    <property type="entry name" value="PurH-like"/>
</dbReference>
<dbReference type="NCBIfam" id="NF002049">
    <property type="entry name" value="PRK00881.1"/>
    <property type="match status" value="1"/>
</dbReference>
<dbReference type="NCBIfam" id="TIGR00355">
    <property type="entry name" value="purH"/>
    <property type="match status" value="1"/>
</dbReference>
<dbReference type="PANTHER" id="PTHR11692:SF0">
    <property type="entry name" value="BIFUNCTIONAL PURINE BIOSYNTHESIS PROTEIN ATIC"/>
    <property type="match status" value="1"/>
</dbReference>
<dbReference type="PANTHER" id="PTHR11692">
    <property type="entry name" value="BIFUNCTIONAL PURINE BIOSYNTHESIS PROTEIN PURH"/>
    <property type="match status" value="1"/>
</dbReference>
<dbReference type="Pfam" id="PF01808">
    <property type="entry name" value="AICARFT_IMPCHas"/>
    <property type="match status" value="1"/>
</dbReference>
<dbReference type="Pfam" id="PF02142">
    <property type="entry name" value="MGS"/>
    <property type="match status" value="1"/>
</dbReference>
<dbReference type="PIRSF" id="PIRSF000414">
    <property type="entry name" value="AICARFT_IMPCHas"/>
    <property type="match status" value="1"/>
</dbReference>
<dbReference type="SMART" id="SM00798">
    <property type="entry name" value="AICARFT_IMPCHas"/>
    <property type="match status" value="1"/>
</dbReference>
<dbReference type="SMART" id="SM00851">
    <property type="entry name" value="MGS"/>
    <property type="match status" value="1"/>
</dbReference>
<dbReference type="SUPFAM" id="SSF53927">
    <property type="entry name" value="Cytidine deaminase-like"/>
    <property type="match status" value="1"/>
</dbReference>
<dbReference type="SUPFAM" id="SSF52335">
    <property type="entry name" value="Methylglyoxal synthase-like"/>
    <property type="match status" value="1"/>
</dbReference>
<dbReference type="PROSITE" id="PS51855">
    <property type="entry name" value="MGS"/>
    <property type="match status" value="1"/>
</dbReference>
<accession>A5GIF4</accession>
<name>PUR9_SYNPW</name>
<protein>
    <recommendedName>
        <fullName evidence="1">Bifunctional purine biosynthesis protein PurH</fullName>
    </recommendedName>
    <domain>
        <recommendedName>
            <fullName evidence="1">Phosphoribosylaminoimidazolecarboxamide formyltransferase</fullName>
            <ecNumber evidence="1">2.1.2.3</ecNumber>
        </recommendedName>
        <alternativeName>
            <fullName evidence="1">AICAR transformylase</fullName>
        </alternativeName>
    </domain>
    <domain>
        <recommendedName>
            <fullName evidence="1">IMP cyclohydrolase</fullName>
            <ecNumber evidence="1">3.5.4.10</ecNumber>
        </recommendedName>
        <alternativeName>
            <fullName evidence="1">ATIC</fullName>
        </alternativeName>
        <alternativeName>
            <fullName evidence="1">IMP synthase</fullName>
        </alternativeName>
        <alternativeName>
            <fullName evidence="1">Inosinicase</fullName>
        </alternativeName>
    </domain>
</protein>
<organism>
    <name type="scientific">Synechococcus sp. (strain WH7803)</name>
    <dbReference type="NCBI Taxonomy" id="32051"/>
    <lineage>
        <taxon>Bacteria</taxon>
        <taxon>Bacillati</taxon>
        <taxon>Cyanobacteriota</taxon>
        <taxon>Cyanophyceae</taxon>
        <taxon>Synechococcales</taxon>
        <taxon>Synechococcaceae</taxon>
        <taxon>Synechococcus</taxon>
    </lineage>
</organism>
<feature type="chain" id="PRO_1000018978" description="Bifunctional purine biosynthesis protein PurH">
    <location>
        <begin position="1"/>
        <end position="528"/>
    </location>
</feature>
<feature type="domain" description="MGS-like" evidence="2">
    <location>
        <begin position="1"/>
        <end position="146"/>
    </location>
</feature>
<comment type="catalytic activity">
    <reaction evidence="1">
        <text>(6R)-10-formyltetrahydrofolate + 5-amino-1-(5-phospho-beta-D-ribosyl)imidazole-4-carboxamide = 5-formamido-1-(5-phospho-D-ribosyl)imidazole-4-carboxamide + (6S)-5,6,7,8-tetrahydrofolate</text>
        <dbReference type="Rhea" id="RHEA:22192"/>
        <dbReference type="ChEBI" id="CHEBI:57453"/>
        <dbReference type="ChEBI" id="CHEBI:58467"/>
        <dbReference type="ChEBI" id="CHEBI:58475"/>
        <dbReference type="ChEBI" id="CHEBI:195366"/>
        <dbReference type="EC" id="2.1.2.3"/>
    </reaction>
</comment>
<comment type="catalytic activity">
    <reaction evidence="1">
        <text>IMP + H2O = 5-formamido-1-(5-phospho-D-ribosyl)imidazole-4-carboxamide</text>
        <dbReference type="Rhea" id="RHEA:18445"/>
        <dbReference type="ChEBI" id="CHEBI:15377"/>
        <dbReference type="ChEBI" id="CHEBI:58053"/>
        <dbReference type="ChEBI" id="CHEBI:58467"/>
        <dbReference type="EC" id="3.5.4.10"/>
    </reaction>
</comment>
<comment type="pathway">
    <text evidence="1">Purine metabolism; IMP biosynthesis via de novo pathway; 5-formamido-1-(5-phospho-D-ribosyl)imidazole-4-carboxamide from 5-amino-1-(5-phospho-D-ribosyl)imidazole-4-carboxamide (10-formyl THF route): step 1/1.</text>
</comment>
<comment type="pathway">
    <text evidence="1">Purine metabolism; IMP biosynthesis via de novo pathway; IMP from 5-formamido-1-(5-phospho-D-ribosyl)imidazole-4-carboxamide: step 1/1.</text>
</comment>
<comment type="domain">
    <text evidence="1">The IMP cyclohydrolase activity resides in the N-terminal region.</text>
</comment>
<comment type="similarity">
    <text evidence="1">Belongs to the PurH family.</text>
</comment>
<gene>
    <name evidence="1" type="primary">purH</name>
    <name type="ordered locus">SynWH7803_0293</name>
</gene>
<proteinExistence type="inferred from homology"/>
<evidence type="ECO:0000255" key="1">
    <source>
        <dbReference type="HAMAP-Rule" id="MF_00139"/>
    </source>
</evidence>
<evidence type="ECO:0000255" key="2">
    <source>
        <dbReference type="PROSITE-ProRule" id="PRU01202"/>
    </source>
</evidence>
<keyword id="KW-0378">Hydrolase</keyword>
<keyword id="KW-0511">Multifunctional enzyme</keyword>
<keyword id="KW-0658">Purine biosynthesis</keyword>
<keyword id="KW-1185">Reference proteome</keyword>
<keyword id="KW-0808">Transferase</keyword>
<sequence length="528" mass="55881">MAPTALLSVSDKSGLLPLAKTLHERYGYQLLSSGGTAKVLQEAGLPVTPVADHTGAPEILGGRVKTLHPRIHGGILARRGDPAHEADLQAQQITPIDVVVVNLYPFRETVSDPAVSWERAIENIDIGGPTMVRSAAKNHDHVAVLTDPDQYDRFLQDLAASGGAVSAAVRRRLALDAFAHTAAYDAAITRWMQNRPELQPADDGSASSLPWLEALPLRQRLRYGENPHQGAAWYSAPKAGWGGAIQLQGKELSTNNLLDLEAALATVREFGYGEGGSHPAQRPAAVVVKHTNPCGVAVADGHAAALTRALDGDRVSAFGGIVAVNGRVDAPAARELTSLFLECVVAPEYAPEAREILASKGNLRLLELPPTAIDAAGHDHVRSILGGLLVQDLDDQPVAADGWTVASERAPSQAERDDLCFAWQLVRHVRSNAIVVARNGQSLGIGAGQMNRVGSARIALEASGDGARGAVLASDGFFPFDDTVRLAAQHGITAVIHPGGSKRDQDSIKACNELGLAMLLTGQRHFLH</sequence>
<reference key="1">
    <citation type="submission" date="2006-05" db="EMBL/GenBank/DDBJ databases">
        <authorList>
            <consortium name="Genoscope"/>
        </authorList>
    </citation>
    <scope>NUCLEOTIDE SEQUENCE [LARGE SCALE GENOMIC DNA]</scope>
    <source>
        <strain>WH7803</strain>
    </source>
</reference>